<name>TRMN6_SHEB5</name>
<reference key="1">
    <citation type="submission" date="2007-02" db="EMBL/GenBank/DDBJ databases">
        <title>Complete sequence of chromosome of Shewanella baltica OS155.</title>
        <authorList>
            <consortium name="US DOE Joint Genome Institute"/>
            <person name="Copeland A."/>
            <person name="Lucas S."/>
            <person name="Lapidus A."/>
            <person name="Barry K."/>
            <person name="Detter J.C."/>
            <person name="Glavina del Rio T."/>
            <person name="Hammon N."/>
            <person name="Israni S."/>
            <person name="Dalin E."/>
            <person name="Tice H."/>
            <person name="Pitluck S."/>
            <person name="Sims D.R."/>
            <person name="Brettin T."/>
            <person name="Bruce D."/>
            <person name="Han C."/>
            <person name="Tapia R."/>
            <person name="Brainard J."/>
            <person name="Schmutz J."/>
            <person name="Larimer F."/>
            <person name="Land M."/>
            <person name="Hauser L."/>
            <person name="Kyrpides N."/>
            <person name="Mikhailova N."/>
            <person name="Brettar I."/>
            <person name="Klappenbach J."/>
            <person name="Konstantinidis K."/>
            <person name="Rodrigues J."/>
            <person name="Tiedje J."/>
            <person name="Richardson P."/>
        </authorList>
    </citation>
    <scope>NUCLEOTIDE SEQUENCE [LARGE SCALE GENOMIC DNA]</scope>
    <source>
        <strain>OS155 / ATCC BAA-1091</strain>
    </source>
</reference>
<protein>
    <recommendedName>
        <fullName evidence="1">tRNA1(Val) (adenine(37)-N6)-methyltransferase</fullName>
        <ecNumber evidence="1">2.1.1.223</ecNumber>
    </recommendedName>
    <alternativeName>
        <fullName evidence="1">tRNA m6A37 methyltransferase</fullName>
    </alternativeName>
</protein>
<gene>
    <name type="ordered locus">Sbal_0841</name>
</gene>
<proteinExistence type="inferred from homology"/>
<accession>A3D0V3</accession>
<evidence type="ECO:0000255" key="1">
    <source>
        <dbReference type="HAMAP-Rule" id="MF_01872"/>
    </source>
</evidence>
<keyword id="KW-0963">Cytoplasm</keyword>
<keyword id="KW-0489">Methyltransferase</keyword>
<keyword id="KW-1185">Reference proteome</keyword>
<keyword id="KW-0949">S-adenosyl-L-methionine</keyword>
<keyword id="KW-0808">Transferase</keyword>
<keyword id="KW-0819">tRNA processing</keyword>
<dbReference type="EC" id="2.1.1.223" evidence="1"/>
<dbReference type="EMBL" id="CP000563">
    <property type="protein sequence ID" value="ABN60366.1"/>
    <property type="molecule type" value="Genomic_DNA"/>
</dbReference>
<dbReference type="RefSeq" id="WP_011845930.1">
    <property type="nucleotide sequence ID" value="NC_009052.1"/>
</dbReference>
<dbReference type="SMR" id="A3D0V3"/>
<dbReference type="STRING" id="325240.Sbal_0841"/>
<dbReference type="KEGG" id="sbl:Sbal_0841"/>
<dbReference type="HOGENOM" id="CLU_061983_0_0_6"/>
<dbReference type="OrthoDB" id="5383291at2"/>
<dbReference type="Proteomes" id="UP000001557">
    <property type="component" value="Chromosome"/>
</dbReference>
<dbReference type="GO" id="GO:0005737">
    <property type="term" value="C:cytoplasm"/>
    <property type="evidence" value="ECO:0007669"/>
    <property type="project" value="UniProtKB-SubCell"/>
</dbReference>
<dbReference type="GO" id="GO:0003676">
    <property type="term" value="F:nucleic acid binding"/>
    <property type="evidence" value="ECO:0007669"/>
    <property type="project" value="InterPro"/>
</dbReference>
<dbReference type="GO" id="GO:0000179">
    <property type="term" value="F:rRNA (adenine-N6,N6-)-dimethyltransferase activity"/>
    <property type="evidence" value="ECO:0007669"/>
    <property type="project" value="InterPro"/>
</dbReference>
<dbReference type="GO" id="GO:0016430">
    <property type="term" value="F:tRNA (adenine-N6)-methyltransferase activity"/>
    <property type="evidence" value="ECO:0007669"/>
    <property type="project" value="UniProtKB-UniRule"/>
</dbReference>
<dbReference type="GO" id="GO:0008033">
    <property type="term" value="P:tRNA processing"/>
    <property type="evidence" value="ECO:0007669"/>
    <property type="project" value="UniProtKB-UniRule"/>
</dbReference>
<dbReference type="CDD" id="cd02440">
    <property type="entry name" value="AdoMet_MTases"/>
    <property type="match status" value="1"/>
</dbReference>
<dbReference type="Gene3D" id="3.40.50.150">
    <property type="entry name" value="Vaccinia Virus protein VP39"/>
    <property type="match status" value="1"/>
</dbReference>
<dbReference type="HAMAP" id="MF_01872">
    <property type="entry name" value="tRNA_methyltr_YfiC"/>
    <property type="match status" value="1"/>
</dbReference>
<dbReference type="InterPro" id="IPR002052">
    <property type="entry name" value="DNA_methylase_N6_adenine_CS"/>
</dbReference>
<dbReference type="InterPro" id="IPR020596">
    <property type="entry name" value="rRNA_Ade_Mease_Trfase_CS"/>
</dbReference>
<dbReference type="InterPro" id="IPR029063">
    <property type="entry name" value="SAM-dependent_MTases_sf"/>
</dbReference>
<dbReference type="InterPro" id="IPR007848">
    <property type="entry name" value="Small_mtfrase_dom"/>
</dbReference>
<dbReference type="InterPro" id="IPR050210">
    <property type="entry name" value="tRNA_Adenine-N(6)_MTase"/>
</dbReference>
<dbReference type="InterPro" id="IPR022882">
    <property type="entry name" value="tRNA_adenine-N6_MeTrfase"/>
</dbReference>
<dbReference type="PANTHER" id="PTHR47739">
    <property type="entry name" value="TRNA1(VAL) (ADENINE(37)-N6)-METHYLTRANSFERASE"/>
    <property type="match status" value="1"/>
</dbReference>
<dbReference type="PANTHER" id="PTHR47739:SF1">
    <property type="entry name" value="TRNA1(VAL) (ADENINE(37)-N6)-METHYLTRANSFERASE"/>
    <property type="match status" value="1"/>
</dbReference>
<dbReference type="Pfam" id="PF05175">
    <property type="entry name" value="MTS"/>
    <property type="match status" value="1"/>
</dbReference>
<dbReference type="SUPFAM" id="SSF53335">
    <property type="entry name" value="S-adenosyl-L-methionine-dependent methyltransferases"/>
    <property type="match status" value="1"/>
</dbReference>
<dbReference type="PROSITE" id="PS00092">
    <property type="entry name" value="N6_MTASE"/>
    <property type="match status" value="1"/>
</dbReference>
<comment type="function">
    <text evidence="1">Specifically methylates the adenine in position 37 of tRNA(1)(Val) (anticodon cmo5UAC).</text>
</comment>
<comment type="catalytic activity">
    <reaction evidence="1">
        <text>adenosine(37) in tRNA1(Val) + S-adenosyl-L-methionine = N(6)-methyladenosine(37) in tRNA1(Val) + S-adenosyl-L-homocysteine + H(+)</text>
        <dbReference type="Rhea" id="RHEA:43160"/>
        <dbReference type="Rhea" id="RHEA-COMP:10369"/>
        <dbReference type="Rhea" id="RHEA-COMP:10370"/>
        <dbReference type="ChEBI" id="CHEBI:15378"/>
        <dbReference type="ChEBI" id="CHEBI:57856"/>
        <dbReference type="ChEBI" id="CHEBI:59789"/>
        <dbReference type="ChEBI" id="CHEBI:74411"/>
        <dbReference type="ChEBI" id="CHEBI:74449"/>
        <dbReference type="EC" id="2.1.1.223"/>
    </reaction>
</comment>
<comment type="subcellular location">
    <subcellularLocation>
        <location evidence="1">Cytoplasm</location>
    </subcellularLocation>
</comment>
<comment type="similarity">
    <text evidence="1">Belongs to the methyltransferase superfamily. tRNA (adenine-N(6)-)-methyltransferase family.</text>
</comment>
<feature type="chain" id="PRO_0000387415" description="tRNA1(Val) (adenine(37)-N6)-methyltransferase">
    <location>
        <begin position="1"/>
        <end position="238"/>
    </location>
</feature>
<sequence length="238" mass="26315">MAFTFKQFHIDDMNCGMAVGTDSVVLGAWAQLTAAKTVLDIGAGSGLLSLMAAQRCQAHITSVELDTSAAEACQHNFHNSPWANRLTLVNSSIQEFCQQIEYQEYFDHIICNPPYFEQGTQAIQSQRAMARHTDSLSFTALLDAIHVCLAPQGNASLILPMQSMARLNEILAHSPLSLIEMTNLISIVGKSANRVLCVLAHKTHPQIATKISDITIRELSGQYTQTMVQLIRDFYLKY</sequence>
<organism>
    <name type="scientific">Shewanella baltica (strain OS155 / ATCC BAA-1091)</name>
    <dbReference type="NCBI Taxonomy" id="325240"/>
    <lineage>
        <taxon>Bacteria</taxon>
        <taxon>Pseudomonadati</taxon>
        <taxon>Pseudomonadota</taxon>
        <taxon>Gammaproteobacteria</taxon>
        <taxon>Alteromonadales</taxon>
        <taxon>Shewanellaceae</taxon>
        <taxon>Shewanella</taxon>
    </lineage>
</organism>